<sequence length="353" mass="38503">MSEMFDVNAAVYPFPPKPVPLDDAQKAFYREKIKILLKQRNAVMVAHYYTDPEIQALAEETGGCVADSLEMARFGSNHPASTLLVAGVRFMGETAKILSPEKRVLMPTLNAECSLDLGCPEEEFNAFCDSHPDRTVVVYANTSAAVKARADWVVTSSIAVELIEHLDSLGEKIIWAPDRHLGSYVQKQTGADMLCWQGACIVHDEFKTQALMRMKALYPNAAILVHPESPQAVVSLADAVGSTSQLIQAAKTLPNSQLIVATDRGIFYKMQQACPDKELFEAPTAGEGATCRSCAHCPWMAMNGLKAIADGLEHGGVLHEIHVDAALRQKALIPLNRMLDFAAELRVQVKGNA</sequence>
<organism>
    <name type="scientific">Serratia proteamaculans (strain 568)</name>
    <dbReference type="NCBI Taxonomy" id="399741"/>
    <lineage>
        <taxon>Bacteria</taxon>
        <taxon>Pseudomonadati</taxon>
        <taxon>Pseudomonadota</taxon>
        <taxon>Gammaproteobacteria</taxon>
        <taxon>Enterobacterales</taxon>
        <taxon>Yersiniaceae</taxon>
        <taxon>Serratia</taxon>
    </lineage>
</organism>
<dbReference type="EC" id="2.5.1.72" evidence="1"/>
<dbReference type="EMBL" id="CP000826">
    <property type="protein sequence ID" value="ABV40386.1"/>
    <property type="molecule type" value="Genomic_DNA"/>
</dbReference>
<dbReference type="SMR" id="A8GB96"/>
<dbReference type="STRING" id="399741.Spro_1282"/>
<dbReference type="KEGG" id="spe:Spro_1282"/>
<dbReference type="eggNOG" id="COG0379">
    <property type="taxonomic scope" value="Bacteria"/>
</dbReference>
<dbReference type="HOGENOM" id="CLU_047382_1_0_6"/>
<dbReference type="OrthoDB" id="9801204at2"/>
<dbReference type="UniPathway" id="UPA00253">
    <property type="reaction ID" value="UER00327"/>
</dbReference>
<dbReference type="GO" id="GO:0005829">
    <property type="term" value="C:cytosol"/>
    <property type="evidence" value="ECO:0007669"/>
    <property type="project" value="TreeGrafter"/>
</dbReference>
<dbReference type="GO" id="GO:0051539">
    <property type="term" value="F:4 iron, 4 sulfur cluster binding"/>
    <property type="evidence" value="ECO:0007669"/>
    <property type="project" value="UniProtKB-KW"/>
</dbReference>
<dbReference type="GO" id="GO:0046872">
    <property type="term" value="F:metal ion binding"/>
    <property type="evidence" value="ECO:0007669"/>
    <property type="project" value="UniProtKB-KW"/>
</dbReference>
<dbReference type="GO" id="GO:0008987">
    <property type="term" value="F:quinolinate synthetase A activity"/>
    <property type="evidence" value="ECO:0007669"/>
    <property type="project" value="UniProtKB-UniRule"/>
</dbReference>
<dbReference type="GO" id="GO:0034628">
    <property type="term" value="P:'de novo' NAD biosynthetic process from L-aspartate"/>
    <property type="evidence" value="ECO:0007669"/>
    <property type="project" value="TreeGrafter"/>
</dbReference>
<dbReference type="FunFam" id="3.40.50.10800:FF:000003">
    <property type="entry name" value="Quinolinate synthase A"/>
    <property type="match status" value="1"/>
</dbReference>
<dbReference type="Gene3D" id="3.40.50.10800">
    <property type="entry name" value="NadA-like"/>
    <property type="match status" value="3"/>
</dbReference>
<dbReference type="HAMAP" id="MF_00567">
    <property type="entry name" value="NadA_type1"/>
    <property type="match status" value="1"/>
</dbReference>
<dbReference type="InterPro" id="IPR003473">
    <property type="entry name" value="NadA"/>
</dbReference>
<dbReference type="InterPro" id="IPR036094">
    <property type="entry name" value="NadA_sf"/>
</dbReference>
<dbReference type="InterPro" id="IPR023513">
    <property type="entry name" value="Quinolinate_synth_A_type1"/>
</dbReference>
<dbReference type="NCBIfam" id="TIGR00550">
    <property type="entry name" value="nadA"/>
    <property type="match status" value="1"/>
</dbReference>
<dbReference type="NCBIfam" id="NF006877">
    <property type="entry name" value="PRK09375.1-1"/>
    <property type="match status" value="1"/>
</dbReference>
<dbReference type="NCBIfam" id="NF006878">
    <property type="entry name" value="PRK09375.1-2"/>
    <property type="match status" value="1"/>
</dbReference>
<dbReference type="PANTHER" id="PTHR30573:SF0">
    <property type="entry name" value="QUINOLINATE SYNTHASE, CHLOROPLASTIC"/>
    <property type="match status" value="1"/>
</dbReference>
<dbReference type="PANTHER" id="PTHR30573">
    <property type="entry name" value="QUINOLINATE SYNTHETASE A"/>
    <property type="match status" value="1"/>
</dbReference>
<dbReference type="Pfam" id="PF02445">
    <property type="entry name" value="NadA"/>
    <property type="match status" value="1"/>
</dbReference>
<dbReference type="SUPFAM" id="SSF142754">
    <property type="entry name" value="NadA-like"/>
    <property type="match status" value="1"/>
</dbReference>
<evidence type="ECO:0000255" key="1">
    <source>
        <dbReference type="HAMAP-Rule" id="MF_00567"/>
    </source>
</evidence>
<proteinExistence type="inferred from homology"/>
<gene>
    <name evidence="1" type="primary">nadA</name>
    <name type="ordered locus">Spro_1282</name>
</gene>
<keyword id="KW-0004">4Fe-4S</keyword>
<keyword id="KW-0963">Cytoplasm</keyword>
<keyword id="KW-0408">Iron</keyword>
<keyword id="KW-0411">Iron-sulfur</keyword>
<keyword id="KW-0479">Metal-binding</keyword>
<keyword id="KW-0662">Pyridine nucleotide biosynthesis</keyword>
<keyword id="KW-0808">Transferase</keyword>
<accession>A8GB96</accession>
<reference key="1">
    <citation type="submission" date="2007-09" db="EMBL/GenBank/DDBJ databases">
        <title>Complete sequence of chromosome of Serratia proteamaculans 568.</title>
        <authorList>
            <consortium name="US DOE Joint Genome Institute"/>
            <person name="Copeland A."/>
            <person name="Lucas S."/>
            <person name="Lapidus A."/>
            <person name="Barry K."/>
            <person name="Glavina del Rio T."/>
            <person name="Dalin E."/>
            <person name="Tice H."/>
            <person name="Pitluck S."/>
            <person name="Chain P."/>
            <person name="Malfatti S."/>
            <person name="Shin M."/>
            <person name="Vergez L."/>
            <person name="Schmutz J."/>
            <person name="Larimer F."/>
            <person name="Land M."/>
            <person name="Hauser L."/>
            <person name="Kyrpides N."/>
            <person name="Kim E."/>
            <person name="Taghavi S."/>
            <person name="Newman L."/>
            <person name="Vangronsveld J."/>
            <person name="van der Lelie D."/>
            <person name="Richardson P."/>
        </authorList>
    </citation>
    <scope>NUCLEOTIDE SEQUENCE [LARGE SCALE GENOMIC DNA]</scope>
    <source>
        <strain>568</strain>
    </source>
</reference>
<name>NADA_SERP5</name>
<feature type="chain" id="PRO_1000061145" description="Quinolinate synthase">
    <location>
        <begin position="1"/>
        <end position="353"/>
    </location>
</feature>
<feature type="binding site" evidence="1">
    <location>
        <position position="47"/>
    </location>
    <ligand>
        <name>iminosuccinate</name>
        <dbReference type="ChEBI" id="CHEBI:77875"/>
    </ligand>
</feature>
<feature type="binding site" evidence="1">
    <location>
        <position position="68"/>
    </location>
    <ligand>
        <name>iminosuccinate</name>
        <dbReference type="ChEBI" id="CHEBI:77875"/>
    </ligand>
</feature>
<feature type="binding site" evidence="1">
    <location>
        <position position="113"/>
    </location>
    <ligand>
        <name>[4Fe-4S] cluster</name>
        <dbReference type="ChEBI" id="CHEBI:49883"/>
    </ligand>
</feature>
<feature type="binding site" evidence="1">
    <location>
        <begin position="139"/>
        <end position="141"/>
    </location>
    <ligand>
        <name>iminosuccinate</name>
        <dbReference type="ChEBI" id="CHEBI:77875"/>
    </ligand>
</feature>
<feature type="binding site" evidence="1">
    <location>
        <position position="156"/>
    </location>
    <ligand>
        <name>iminosuccinate</name>
        <dbReference type="ChEBI" id="CHEBI:77875"/>
    </ligand>
</feature>
<feature type="binding site" evidence="1">
    <location>
        <position position="200"/>
    </location>
    <ligand>
        <name>[4Fe-4S] cluster</name>
        <dbReference type="ChEBI" id="CHEBI:49883"/>
    </ligand>
</feature>
<feature type="binding site" evidence="1">
    <location>
        <begin position="226"/>
        <end position="228"/>
    </location>
    <ligand>
        <name>iminosuccinate</name>
        <dbReference type="ChEBI" id="CHEBI:77875"/>
    </ligand>
</feature>
<feature type="binding site" evidence="1">
    <location>
        <position position="243"/>
    </location>
    <ligand>
        <name>iminosuccinate</name>
        <dbReference type="ChEBI" id="CHEBI:77875"/>
    </ligand>
</feature>
<feature type="binding site" evidence="1">
    <location>
        <position position="297"/>
    </location>
    <ligand>
        <name>[4Fe-4S] cluster</name>
        <dbReference type="ChEBI" id="CHEBI:49883"/>
    </ligand>
</feature>
<protein>
    <recommendedName>
        <fullName evidence="1">Quinolinate synthase</fullName>
        <ecNumber evidence="1">2.5.1.72</ecNumber>
    </recommendedName>
</protein>
<comment type="function">
    <text evidence="1">Catalyzes the condensation of iminoaspartate with dihydroxyacetone phosphate to form quinolinate.</text>
</comment>
<comment type="catalytic activity">
    <reaction evidence="1">
        <text>iminosuccinate + dihydroxyacetone phosphate = quinolinate + phosphate + 2 H2O + H(+)</text>
        <dbReference type="Rhea" id="RHEA:25888"/>
        <dbReference type="ChEBI" id="CHEBI:15377"/>
        <dbReference type="ChEBI" id="CHEBI:15378"/>
        <dbReference type="ChEBI" id="CHEBI:29959"/>
        <dbReference type="ChEBI" id="CHEBI:43474"/>
        <dbReference type="ChEBI" id="CHEBI:57642"/>
        <dbReference type="ChEBI" id="CHEBI:77875"/>
        <dbReference type="EC" id="2.5.1.72"/>
    </reaction>
    <physiologicalReaction direction="left-to-right" evidence="1">
        <dbReference type="Rhea" id="RHEA:25889"/>
    </physiologicalReaction>
</comment>
<comment type="cofactor">
    <cofactor evidence="1">
        <name>[4Fe-4S] cluster</name>
        <dbReference type="ChEBI" id="CHEBI:49883"/>
    </cofactor>
    <text evidence="1">Binds 1 [4Fe-4S] cluster per subunit.</text>
</comment>
<comment type="pathway">
    <text evidence="1">Cofactor biosynthesis; NAD(+) biosynthesis; quinolinate from iminoaspartate: step 1/1.</text>
</comment>
<comment type="subcellular location">
    <subcellularLocation>
        <location evidence="1">Cytoplasm</location>
    </subcellularLocation>
</comment>
<comment type="similarity">
    <text evidence="1">Belongs to the quinolinate synthase family. Type 1 subfamily.</text>
</comment>